<dbReference type="EMBL" id="BA000021">
    <property type="protein sequence ID" value="BAC24700.1"/>
    <property type="molecule type" value="Genomic_DNA"/>
</dbReference>
<dbReference type="SMR" id="Q8D201"/>
<dbReference type="STRING" id="36870.gene:10369063"/>
<dbReference type="KEGG" id="wbr:rplX"/>
<dbReference type="eggNOG" id="COG0198">
    <property type="taxonomic scope" value="Bacteria"/>
</dbReference>
<dbReference type="HOGENOM" id="CLU_093315_2_2_6"/>
<dbReference type="OrthoDB" id="9807419at2"/>
<dbReference type="Proteomes" id="UP000000562">
    <property type="component" value="Chromosome"/>
</dbReference>
<dbReference type="GO" id="GO:1990904">
    <property type="term" value="C:ribonucleoprotein complex"/>
    <property type="evidence" value="ECO:0007669"/>
    <property type="project" value="UniProtKB-KW"/>
</dbReference>
<dbReference type="GO" id="GO:0005840">
    <property type="term" value="C:ribosome"/>
    <property type="evidence" value="ECO:0007669"/>
    <property type="project" value="UniProtKB-KW"/>
</dbReference>
<dbReference type="GO" id="GO:0019843">
    <property type="term" value="F:rRNA binding"/>
    <property type="evidence" value="ECO:0007669"/>
    <property type="project" value="UniProtKB-UniRule"/>
</dbReference>
<dbReference type="GO" id="GO:0003735">
    <property type="term" value="F:structural constituent of ribosome"/>
    <property type="evidence" value="ECO:0007669"/>
    <property type="project" value="InterPro"/>
</dbReference>
<dbReference type="GO" id="GO:0006412">
    <property type="term" value="P:translation"/>
    <property type="evidence" value="ECO:0007669"/>
    <property type="project" value="UniProtKB-UniRule"/>
</dbReference>
<dbReference type="CDD" id="cd06089">
    <property type="entry name" value="KOW_RPL26"/>
    <property type="match status" value="1"/>
</dbReference>
<dbReference type="Gene3D" id="2.30.30.30">
    <property type="match status" value="1"/>
</dbReference>
<dbReference type="HAMAP" id="MF_01326_B">
    <property type="entry name" value="Ribosomal_uL24_B"/>
    <property type="match status" value="1"/>
</dbReference>
<dbReference type="InterPro" id="IPR005824">
    <property type="entry name" value="KOW"/>
</dbReference>
<dbReference type="InterPro" id="IPR014722">
    <property type="entry name" value="Rib_uL2_dom2"/>
</dbReference>
<dbReference type="InterPro" id="IPR003256">
    <property type="entry name" value="Ribosomal_uL24"/>
</dbReference>
<dbReference type="InterPro" id="IPR041988">
    <property type="entry name" value="Ribosomal_uL24_KOW"/>
</dbReference>
<dbReference type="InterPro" id="IPR008991">
    <property type="entry name" value="Translation_prot_SH3-like_sf"/>
</dbReference>
<dbReference type="NCBIfam" id="TIGR01079">
    <property type="entry name" value="rplX_bact"/>
    <property type="match status" value="1"/>
</dbReference>
<dbReference type="PANTHER" id="PTHR12903">
    <property type="entry name" value="MITOCHONDRIAL RIBOSOMAL PROTEIN L24"/>
    <property type="match status" value="1"/>
</dbReference>
<dbReference type="Pfam" id="PF00467">
    <property type="entry name" value="KOW"/>
    <property type="match status" value="1"/>
</dbReference>
<dbReference type="Pfam" id="PF17136">
    <property type="entry name" value="ribosomal_L24"/>
    <property type="match status" value="1"/>
</dbReference>
<dbReference type="SMART" id="SM00739">
    <property type="entry name" value="KOW"/>
    <property type="match status" value="1"/>
</dbReference>
<dbReference type="SUPFAM" id="SSF50104">
    <property type="entry name" value="Translation proteins SH3-like domain"/>
    <property type="match status" value="1"/>
</dbReference>
<name>RL24_WIGBR</name>
<gene>
    <name evidence="1" type="primary">rplX</name>
    <name type="ordered locus">WIGBR5540</name>
</gene>
<organism>
    <name type="scientific">Wigglesworthia glossinidia brevipalpis</name>
    <dbReference type="NCBI Taxonomy" id="36870"/>
    <lineage>
        <taxon>Bacteria</taxon>
        <taxon>Pseudomonadati</taxon>
        <taxon>Pseudomonadota</taxon>
        <taxon>Gammaproteobacteria</taxon>
        <taxon>Enterobacterales</taxon>
        <taxon>Erwiniaceae</taxon>
        <taxon>Wigglesworthia</taxon>
    </lineage>
</organism>
<sequence>MSKKIKLNDEIIVRVGKYKGKTGKIKKIFSDGKAIIEGINISKKHKKPTPNEKQSGGIFEKEQPISLSNVAIFNIDTNKPDKVKFKIEKGKKYRIFKSNGKKIK</sequence>
<proteinExistence type="inferred from homology"/>
<evidence type="ECO:0000255" key="1">
    <source>
        <dbReference type="HAMAP-Rule" id="MF_01326"/>
    </source>
</evidence>
<evidence type="ECO:0000256" key="2">
    <source>
        <dbReference type="SAM" id="MobiDB-lite"/>
    </source>
</evidence>
<evidence type="ECO:0000305" key="3"/>
<comment type="function">
    <text evidence="1">One of two assembly initiator proteins, it binds directly to the 5'-end of the 23S rRNA, where it nucleates assembly of the 50S subunit.</text>
</comment>
<comment type="function">
    <text evidence="1">One of the proteins that surrounds the polypeptide exit tunnel on the outside of the subunit.</text>
</comment>
<comment type="subunit">
    <text evidence="1">Part of the 50S ribosomal subunit.</text>
</comment>
<comment type="similarity">
    <text evidence="1">Belongs to the universal ribosomal protein uL24 family.</text>
</comment>
<reference key="1">
    <citation type="journal article" date="2002" name="Nat. Genet.">
        <title>Genome sequence of the endocellular obligate symbiont of tsetse flies, Wigglesworthia glossinidia.</title>
        <authorList>
            <person name="Akman L."/>
            <person name="Yamashita A."/>
            <person name="Watanabe H."/>
            <person name="Oshima K."/>
            <person name="Shiba T."/>
            <person name="Hattori M."/>
            <person name="Aksoy S."/>
        </authorList>
    </citation>
    <scope>NUCLEOTIDE SEQUENCE [LARGE SCALE GENOMIC DNA]</scope>
</reference>
<protein>
    <recommendedName>
        <fullName evidence="1">Large ribosomal subunit protein uL24</fullName>
    </recommendedName>
    <alternativeName>
        <fullName evidence="3">50S ribosomal protein L24</fullName>
    </alternativeName>
</protein>
<accession>Q8D201</accession>
<feature type="chain" id="PRO_0000130752" description="Large ribosomal subunit protein uL24">
    <location>
        <begin position="1"/>
        <end position="104"/>
    </location>
</feature>
<feature type="region of interest" description="Disordered" evidence="2">
    <location>
        <begin position="41"/>
        <end position="61"/>
    </location>
</feature>
<keyword id="KW-1185">Reference proteome</keyword>
<keyword id="KW-0687">Ribonucleoprotein</keyword>
<keyword id="KW-0689">Ribosomal protein</keyword>
<keyword id="KW-0694">RNA-binding</keyword>
<keyword id="KW-0699">rRNA-binding</keyword>